<proteinExistence type="evidence at protein level"/>
<reference key="1">
    <citation type="journal article" date="1991" name="J. Bacteriol.">
        <title>Genetic organization of methylamine utilization genes from Methylobacterium extorquens AM1.</title>
        <authorList>
            <person name="Chistoserdov A.Y."/>
            <person name="Tsygankov Y.D."/>
            <person name="Lidstrom M.E."/>
        </authorList>
    </citation>
    <scope>NUCLEOTIDE SEQUENCE [GENOMIC DNA]</scope>
</reference>
<reference key="2">
    <citation type="journal article" date="1994" name="J. Bacteriol.">
        <title>Genetic organization of the mau gene cluster in Methylobacterium extorquens AM1: complete nucleotide sequence and generation and characteristics of mau mutants.</title>
        <authorList>
            <person name="Chistoserdov A.Y."/>
            <person name="Chistoserdova L.V."/>
            <person name="McIntire W.S."/>
            <person name="Lidstrom M.E."/>
        </authorList>
    </citation>
    <scope>NUCLEOTIDE SEQUENCE [GENOMIC DNA]</scope>
</reference>
<reference key="3">
    <citation type="journal article" date="2009" name="PLoS ONE">
        <title>Methylobacterium genome sequences: a reference blueprint to investigate microbial metabolism of C1 compounds from natural and industrial sources.</title>
        <authorList>
            <person name="Vuilleumier S."/>
            <person name="Chistoserdova L."/>
            <person name="Lee M.-C."/>
            <person name="Bringel F."/>
            <person name="Lajus A."/>
            <person name="Zhou Y."/>
            <person name="Gourion B."/>
            <person name="Barbe V."/>
            <person name="Chang J."/>
            <person name="Cruveiller S."/>
            <person name="Dossat C."/>
            <person name="Gillett W."/>
            <person name="Gruffaz C."/>
            <person name="Haugen E."/>
            <person name="Hourcade E."/>
            <person name="Levy R."/>
            <person name="Mangenot S."/>
            <person name="Muller E."/>
            <person name="Nadalig T."/>
            <person name="Pagni M."/>
            <person name="Penny C."/>
            <person name="Peyraud R."/>
            <person name="Robinson D.G."/>
            <person name="Roche D."/>
            <person name="Rouy Z."/>
            <person name="Saenampechek C."/>
            <person name="Salvignol G."/>
            <person name="Vallenet D."/>
            <person name="Wu Z."/>
            <person name="Marx C.J."/>
            <person name="Vorholt J.A."/>
            <person name="Olson M.V."/>
            <person name="Kaul R."/>
            <person name="Weissenbach J."/>
            <person name="Medigue C."/>
            <person name="Lidstrom M.E."/>
        </authorList>
    </citation>
    <scope>NUCLEOTIDE SEQUENCE [LARGE SCALE GENOMIC DNA]</scope>
    <source>
        <strain>ATCC 14718 / DSM 1338 / JCM 2805 / NCIMB 9133 / AM1</strain>
    </source>
</reference>
<reference key="4">
    <citation type="journal article" date="1990" name="Biochem. Biophys. Res. Commun.">
        <title>Cloning and sequencing of the structural gene for the small subunit of methylamine dehydrogenase from Methylobacterium extorquens AM1: evidence for two tryptophan residues involved in the active center.</title>
        <authorList>
            <person name="Chistoserdov A.Y."/>
            <person name="Tsygankov Y.D."/>
            <person name="Lidstrom M.E."/>
        </authorList>
    </citation>
    <scope>NUCLEOTIDE SEQUENCE [GENOMIC DNA] OF 58-186</scope>
</reference>
<reference key="5">
    <citation type="journal article" date="1983" name="J. Biochem.">
        <title>Amino acid sequence studies of the light subunit of methylamine dehydrogenase from Pseudomonas AM1: existence of two residues binding the prosthetic group.</title>
        <authorList>
            <person name="Ishii Y."/>
            <person name="Hase T."/>
            <person name="Fukumori Y."/>
            <person name="Matsubara H."/>
            <person name="Tobari J."/>
        </authorList>
    </citation>
    <scope>PROTEIN SEQUENCE OF 58-186</scope>
</reference>
<reference key="6">
    <citation type="journal article" date="1991" name="J. Bacteriol.">
        <title>The small-subunit polypeptide of methylamine dehydrogenase from Methylobacterium extorquens AM1 has an unusual leader sequence.</title>
        <authorList>
            <person name="Chistoserdov A.Y."/>
            <person name="Lidstrom M.E."/>
        </authorList>
    </citation>
    <scope>PRESENCE OF UNUSUAL LEADER SEQUENCE</scope>
</reference>
<reference key="7">
    <citation type="journal article" date="1991" name="Science">
        <title>A new cofactor in a prokaryotic enzyme: tryptophan tryptophylquinone as the redox prosthetic group in methylamine dehydrogenase.</title>
        <authorList>
            <person name="McIntire W.S."/>
            <person name="Wemmer D.E."/>
            <person name="Chistoserdov A.Y."/>
            <person name="Lidstrom M.E."/>
        </authorList>
    </citation>
    <scope>CHARACTERIZATION OF COFACTOR</scope>
</reference>
<name>DHML_METEA</name>
<keyword id="KW-0903">Direct protein sequencing</keyword>
<keyword id="KW-1015">Disulfide bond</keyword>
<keyword id="KW-0249">Electron transport</keyword>
<keyword id="KW-0560">Oxidoreductase</keyword>
<keyword id="KW-0574">Periplasm</keyword>
<keyword id="KW-1185">Reference proteome</keyword>
<keyword id="KW-0732">Signal</keyword>
<keyword id="KW-0813">Transport</keyword>
<keyword id="KW-0824">TTQ</keyword>
<comment type="function">
    <text>Methylamine dehydrogenase carries out the oxidation of methylamine. Electrons are passed from methylamine dehydrogenase to amicyanin.</text>
</comment>
<comment type="catalytic activity">
    <reaction>
        <text>2 oxidized [amicyanin] + methylamine + H2O = 2 reduced [amicyanin] + formaldehyde + NH4(+) + 2 H(+)</text>
        <dbReference type="Rhea" id="RHEA:30207"/>
        <dbReference type="Rhea" id="RHEA-COMP:11100"/>
        <dbReference type="Rhea" id="RHEA-COMP:11101"/>
        <dbReference type="ChEBI" id="CHEBI:15377"/>
        <dbReference type="ChEBI" id="CHEBI:15378"/>
        <dbReference type="ChEBI" id="CHEBI:16842"/>
        <dbReference type="ChEBI" id="CHEBI:28938"/>
        <dbReference type="ChEBI" id="CHEBI:29036"/>
        <dbReference type="ChEBI" id="CHEBI:49552"/>
        <dbReference type="ChEBI" id="CHEBI:59338"/>
        <dbReference type="EC" id="1.4.9.1"/>
    </reaction>
</comment>
<comment type="cofactor">
    <cofactor>
        <name>tryptophan tryptophylquinone residue</name>
        <dbReference type="ChEBI" id="CHEBI:20251"/>
    </cofactor>
    <text>Uses a protein-derived tryptophan tryptophylquinone (TTQ) cofactor.</text>
</comment>
<comment type="pathway">
    <text>One-carbon metabolism; methylamine degradation; formaldehyde from methylamine: step 1/1.</text>
</comment>
<comment type="subunit">
    <text>Heterotetramer of two light and two heavy chains.</text>
</comment>
<comment type="subcellular location">
    <subcellularLocation>
        <location>Periplasm</location>
    </subcellularLocation>
</comment>
<comment type="PTM">
    <text>Predicted to be exported by the Tat system. The position of the signal peptide cleavage has been experimentally proven.</text>
</comment>
<comment type="PTM">
    <text>Tryptophan tryptophylquinone (TTQ) is formed by oxidation of the indole ring of a tryptophan to form tryptophylquinone followed by covalent cross-linking with another tryptophan residue.</text>
</comment>
<comment type="similarity">
    <text evidence="4">Belongs to the aromatic amine dehydrogenase light chain family.</text>
</comment>
<gene>
    <name type="primary">mauA</name>
    <name type="ordered locus">MexAM1_META1p2773</name>
</gene>
<protein>
    <recommendedName>
        <fullName>Methylamine dehydrogenase light chain</fullName>
        <shortName>MADH</shortName>
        <ecNumber>1.4.9.1</ecNumber>
    </recommendedName>
    <alternativeName>
        <fullName>Methylamine dehydrogenase (amicyanin)</fullName>
    </alternativeName>
</protein>
<dbReference type="EC" id="1.4.9.1"/>
<dbReference type="EMBL" id="M57963">
    <property type="protein sequence ID" value="AAA68894.1"/>
    <property type="molecule type" value="Genomic_DNA"/>
</dbReference>
<dbReference type="EMBL" id="L26406">
    <property type="protein sequence ID" value="AAB46936.1"/>
    <property type="molecule type" value="Genomic_DNA"/>
</dbReference>
<dbReference type="EMBL" id="CP001510">
    <property type="protein sequence ID" value="ACS40531.1"/>
    <property type="molecule type" value="Genomic_DNA"/>
</dbReference>
<dbReference type="EMBL" id="M58517">
    <property type="protein sequence ID" value="AAA25379.1"/>
    <property type="molecule type" value="Genomic_DNA"/>
</dbReference>
<dbReference type="PIR" id="A36676">
    <property type="entry name" value="DEPSNL"/>
</dbReference>
<dbReference type="RefSeq" id="WP_012753046.1">
    <property type="nucleotide sequence ID" value="NC_012808.1"/>
</dbReference>
<dbReference type="SMR" id="P00372"/>
<dbReference type="STRING" id="272630.MexAM1_META1p2773"/>
<dbReference type="KEGG" id="mea:Mex_1p2773"/>
<dbReference type="eggNOG" id="ENOG502ZHBX">
    <property type="taxonomic scope" value="Bacteria"/>
</dbReference>
<dbReference type="HOGENOM" id="CLU_116271_0_0_5"/>
<dbReference type="OrthoDB" id="7628766at2"/>
<dbReference type="BioCyc" id="MetaCyc:MONOMER-3906"/>
<dbReference type="UniPathway" id="UPA00895">
    <property type="reaction ID" value="UER00870"/>
</dbReference>
<dbReference type="Proteomes" id="UP000009081">
    <property type="component" value="Chromosome"/>
</dbReference>
<dbReference type="GO" id="GO:0030288">
    <property type="term" value="C:outer membrane-bounded periplasmic space"/>
    <property type="evidence" value="ECO:0007669"/>
    <property type="project" value="InterPro"/>
</dbReference>
<dbReference type="GO" id="GO:0030058">
    <property type="term" value="F:aliphatic amine dehydrogenase activity"/>
    <property type="evidence" value="ECO:0007669"/>
    <property type="project" value="InterPro"/>
</dbReference>
<dbReference type="GO" id="GO:0052876">
    <property type="term" value="F:methylamine dehydrogenase (amicyanin) activity"/>
    <property type="evidence" value="ECO:0007669"/>
    <property type="project" value="UniProtKB-EC"/>
</dbReference>
<dbReference type="GO" id="GO:0009308">
    <property type="term" value="P:amine metabolic process"/>
    <property type="evidence" value="ECO:0007669"/>
    <property type="project" value="InterPro"/>
</dbReference>
<dbReference type="Gene3D" id="2.60.30.10">
    <property type="entry name" value="Methylamine/Aralkylamine dehydrogenase light chain"/>
    <property type="match status" value="1"/>
</dbReference>
<dbReference type="InterPro" id="IPR016008">
    <property type="entry name" value="Amine_DH_Ltc"/>
</dbReference>
<dbReference type="InterPro" id="IPR036560">
    <property type="entry name" value="MADH/AADH_L_sf"/>
</dbReference>
<dbReference type="InterPro" id="IPR013504">
    <property type="entry name" value="MADH/AADH_Ltc_C_dom"/>
</dbReference>
<dbReference type="InterPro" id="IPR004229">
    <property type="entry name" value="MeN_DH_Ltc"/>
</dbReference>
<dbReference type="InterPro" id="IPR006311">
    <property type="entry name" value="TAT_signal"/>
</dbReference>
<dbReference type="InterPro" id="IPR019546">
    <property type="entry name" value="TAT_signal_bac_arc"/>
</dbReference>
<dbReference type="NCBIfam" id="TIGR01409">
    <property type="entry name" value="TAT_signal_seq"/>
    <property type="match status" value="1"/>
</dbReference>
<dbReference type="NCBIfam" id="TIGR02659">
    <property type="entry name" value="TTQ_MADH_Lt"/>
    <property type="match status" value="1"/>
</dbReference>
<dbReference type="Pfam" id="PF02975">
    <property type="entry name" value="Me-amine-dh_L"/>
    <property type="match status" value="1"/>
</dbReference>
<dbReference type="PIRSF" id="PIRSF000192">
    <property type="entry name" value="Amine_dh_beta"/>
    <property type="match status" value="1"/>
</dbReference>
<dbReference type="SUPFAM" id="SSF57561">
    <property type="entry name" value="Methylamine dehydrogenase, L chain"/>
    <property type="match status" value="1"/>
</dbReference>
<dbReference type="PROSITE" id="PS51318">
    <property type="entry name" value="TAT"/>
    <property type="match status" value="1"/>
</dbReference>
<feature type="signal peptide" description="Tat-type signal" evidence="2 3">
    <location>
        <begin position="1"/>
        <end position="57"/>
    </location>
</feature>
<feature type="chain" id="PRO_0000025572" description="Methylamine dehydrogenase light chain">
    <location>
        <begin position="58"/>
        <end position="186"/>
    </location>
</feature>
<feature type="modified residue" description="Tryptophylquinone">
    <location>
        <position position="112"/>
    </location>
</feature>
<feature type="disulfide bond" evidence="1">
    <location>
        <begin position="78"/>
        <end position="143"/>
    </location>
</feature>
<feature type="disulfide bond" evidence="1">
    <location>
        <begin position="84"/>
        <end position="116"/>
    </location>
</feature>
<feature type="disulfide bond" evidence="1">
    <location>
        <begin position="91"/>
        <end position="176"/>
    </location>
</feature>
<feature type="disulfide bond" evidence="1">
    <location>
        <begin position="93"/>
        <end position="141"/>
    </location>
</feature>
<feature type="disulfide bond" evidence="1">
    <location>
        <begin position="101"/>
        <end position="132"/>
    </location>
</feature>
<feature type="disulfide bond" evidence="1">
    <location>
        <begin position="133"/>
        <end position="164"/>
    </location>
</feature>
<feature type="cross-link" description="Tryptophan tryptophylquinone (Trp-Trp)">
    <location>
        <begin position="112"/>
        <end position="163"/>
    </location>
</feature>
<feature type="sequence variant">
    <original>K</original>
    <variation>L</variation>
    <location>
        <position position="106"/>
    </location>
</feature>
<feature type="sequence conflict" description="In Ref. 5; AA sequence." evidence="4" ref="5">
    <original>D</original>
    <variation>N</variation>
    <location>
        <position position="74"/>
    </location>
</feature>
<accession>P00372</accession>
<accession>C5ATK7</accession>
<accession>Q60146</accession>
<organism>
    <name type="scientific">Methylorubrum extorquens (strain ATCC 14718 / DSM 1338 / JCM 2805 / NCIMB 9133 / AM1)</name>
    <name type="common">Methylobacterium extorquens</name>
    <dbReference type="NCBI Taxonomy" id="272630"/>
    <lineage>
        <taxon>Bacteria</taxon>
        <taxon>Pseudomonadati</taxon>
        <taxon>Pseudomonadota</taxon>
        <taxon>Alphaproteobacteria</taxon>
        <taxon>Hyphomicrobiales</taxon>
        <taxon>Methylobacteriaceae</taxon>
        <taxon>Methylorubrum</taxon>
    </lineage>
</organism>
<evidence type="ECO:0000250" key="1"/>
<evidence type="ECO:0000255" key="2">
    <source>
        <dbReference type="PROSITE-ProRule" id="PRU00648"/>
    </source>
</evidence>
<evidence type="ECO:0000269" key="3">
    <source>
    </source>
</evidence>
<evidence type="ECO:0000305" key="4"/>
<sequence length="186" mass="20085">MLGKSQFDDLFEKMSRKVAGHTSRRGFIGRVGTAVAGVALVPLLPVDRRGRVSRANAAESAGDPRGKWKPQDNDVQSCDYWRHCSIDGNICDCSGGSLTSCPPGTKLASSSWVASCYNPTDKQSYLISYRDCCGANVSGRCACLNTEGELPVYRPEFGNDIIWCFGAEDDAMTYHCTISPIVGKAS</sequence>